<name>RS17B_YEAST</name>
<keyword id="KW-0002">3D-structure</keyword>
<keyword id="KW-0963">Cytoplasm</keyword>
<keyword id="KW-1185">Reference proteome</keyword>
<keyword id="KW-0687">Ribonucleoprotein</keyword>
<keyword id="KW-0689">Ribosomal protein</keyword>
<organism>
    <name type="scientific">Saccharomyces cerevisiae (strain ATCC 204508 / S288c)</name>
    <name type="common">Baker's yeast</name>
    <dbReference type="NCBI Taxonomy" id="559292"/>
    <lineage>
        <taxon>Eukaryota</taxon>
        <taxon>Fungi</taxon>
        <taxon>Dikarya</taxon>
        <taxon>Ascomycota</taxon>
        <taxon>Saccharomycotina</taxon>
        <taxon>Saccharomycetes</taxon>
        <taxon>Saccharomycetales</taxon>
        <taxon>Saccharomycetaceae</taxon>
        <taxon>Saccharomyces</taxon>
    </lineage>
</organism>
<accession>P14127</accession>
<accession>D6VT72</accession>
<gene>
    <name evidence="5" type="primary">RPS17B</name>
    <name type="synonym">RP51B</name>
    <name type="ordered locus">YDR447C</name>
</gene>
<sequence length="136" mass="15803">MGRVRTKTVKRASKALIERYYPKLTLDFQTNKRLCDEIATIQSKRLRNKIAGYTTHLMKRIQKGPVRGISFKLQEEERERKDQYVPEVSALDLSRSNGVLNVDNQTSDLVKSLGLKLPLSVINVSAQRDRRYRKRN</sequence>
<feature type="chain" id="PRO_0000141547" description="Small ribosomal subunit protein eS17B">
    <location>
        <begin position="1"/>
        <end position="136"/>
    </location>
</feature>
<feature type="helix" evidence="9">
    <location>
        <begin position="7"/>
        <end position="20"/>
    </location>
</feature>
<feature type="turn" evidence="9">
    <location>
        <begin position="21"/>
        <end position="23"/>
    </location>
</feature>
<feature type="helix" evidence="9">
    <location>
        <begin position="28"/>
        <end position="38"/>
    </location>
</feature>
<feature type="helix" evidence="9">
    <location>
        <begin position="44"/>
        <end position="62"/>
    </location>
</feature>
<feature type="helix" evidence="9">
    <location>
        <begin position="72"/>
        <end position="80"/>
    </location>
</feature>
<feature type="helix" evidence="9">
    <location>
        <begin position="104"/>
        <end position="113"/>
    </location>
</feature>
<evidence type="ECO:0000269" key="1">
    <source>
    </source>
</evidence>
<evidence type="ECO:0000269" key="2">
    <source>
    </source>
</evidence>
<evidence type="ECO:0000269" key="3">
    <source>
    </source>
</evidence>
<evidence type="ECO:0000303" key="4">
    <source>
    </source>
</evidence>
<evidence type="ECO:0000303" key="5">
    <source>
    </source>
</evidence>
<evidence type="ECO:0000305" key="6"/>
<evidence type="ECO:0000305" key="7">
    <source>
    </source>
</evidence>
<evidence type="ECO:0000305" key="8">
    <source>
    </source>
</evidence>
<evidence type="ECO:0007829" key="9">
    <source>
        <dbReference type="PDB" id="7A1G"/>
    </source>
</evidence>
<proteinExistence type="evidence at protein level"/>
<dbReference type="EMBL" id="K02480">
    <property type="protein sequence ID" value="AAA34991.1"/>
    <property type="molecule type" value="Genomic_DNA"/>
</dbReference>
<dbReference type="EMBL" id="U33007">
    <property type="protein sequence ID" value="AAB64890.1"/>
    <property type="molecule type" value="Genomic_DNA"/>
</dbReference>
<dbReference type="EMBL" id="BK006938">
    <property type="protein sequence ID" value="DAA12282.1"/>
    <property type="molecule type" value="Genomic_DNA"/>
</dbReference>
<dbReference type="PIR" id="S20161">
    <property type="entry name" value="R4BY7B"/>
</dbReference>
<dbReference type="RefSeq" id="NP_010735.3">
    <property type="nucleotide sequence ID" value="NM_001180755.3"/>
</dbReference>
<dbReference type="PDB" id="5M1J">
    <property type="method" value="EM"/>
    <property type="resolution" value="3.30 A"/>
    <property type="chains" value="R2=2-126"/>
</dbReference>
<dbReference type="PDB" id="5MC6">
    <property type="method" value="EM"/>
    <property type="resolution" value="3.80 A"/>
    <property type="chains" value="G=1-136"/>
</dbReference>
<dbReference type="PDB" id="5MEI">
    <property type="method" value="X-ray"/>
    <property type="resolution" value="3.50 A"/>
    <property type="chains" value="S=2-126"/>
</dbReference>
<dbReference type="PDB" id="5TBW">
    <property type="method" value="X-ray"/>
    <property type="resolution" value="3.00 A"/>
    <property type="chains" value="S=2-126"/>
</dbReference>
<dbReference type="PDB" id="5TGA">
    <property type="method" value="X-ray"/>
    <property type="resolution" value="3.30 A"/>
    <property type="chains" value="C7/c7=2-126"/>
</dbReference>
<dbReference type="PDB" id="5TGM">
    <property type="method" value="X-ray"/>
    <property type="resolution" value="3.50 A"/>
    <property type="chains" value="C7/c7=2-126"/>
</dbReference>
<dbReference type="PDB" id="6GQ1">
    <property type="method" value="EM"/>
    <property type="resolution" value="4.40 A"/>
    <property type="chains" value="AH=2-126"/>
</dbReference>
<dbReference type="PDB" id="6GQB">
    <property type="method" value="EM"/>
    <property type="resolution" value="3.90 A"/>
    <property type="chains" value="AH=2-126"/>
</dbReference>
<dbReference type="PDB" id="6GQV">
    <property type="method" value="EM"/>
    <property type="resolution" value="4.00 A"/>
    <property type="chains" value="AH=2-126"/>
</dbReference>
<dbReference type="PDB" id="6SNT">
    <property type="method" value="EM"/>
    <property type="resolution" value="2.80 A"/>
    <property type="chains" value="R=1-136"/>
</dbReference>
<dbReference type="PDB" id="6SV4">
    <property type="method" value="EM"/>
    <property type="resolution" value="3.30 A"/>
    <property type="chains" value="G/Gb/Gc=1-136"/>
</dbReference>
<dbReference type="PDB" id="6T7I">
    <property type="method" value="EM"/>
    <property type="resolution" value="3.20 A"/>
    <property type="chains" value="SR=1-136"/>
</dbReference>
<dbReference type="PDB" id="6T7T">
    <property type="method" value="EM"/>
    <property type="resolution" value="3.10 A"/>
    <property type="chains" value="SR=1-136"/>
</dbReference>
<dbReference type="PDB" id="6T83">
    <property type="method" value="EM"/>
    <property type="resolution" value="4.00 A"/>
    <property type="chains" value="Rb/s=1-136"/>
</dbReference>
<dbReference type="PDB" id="6TB3">
    <property type="method" value="EM"/>
    <property type="resolution" value="2.80 A"/>
    <property type="chains" value="G=2-126"/>
</dbReference>
<dbReference type="PDB" id="6TNU">
    <property type="method" value="EM"/>
    <property type="resolution" value="3.10 A"/>
    <property type="chains" value="G=2-126"/>
</dbReference>
<dbReference type="PDB" id="6WOO">
    <property type="method" value="EM"/>
    <property type="resolution" value="2.90 A"/>
    <property type="chains" value="RR=2-124"/>
</dbReference>
<dbReference type="PDB" id="6XIQ">
    <property type="method" value="EM"/>
    <property type="resolution" value="4.20 A"/>
    <property type="chains" value="AH=1-136"/>
</dbReference>
<dbReference type="PDB" id="6XIR">
    <property type="method" value="EM"/>
    <property type="resolution" value="3.20 A"/>
    <property type="chains" value="AH=1-136"/>
</dbReference>
<dbReference type="PDB" id="7A1G">
    <property type="method" value="EM"/>
    <property type="resolution" value="3.00 A"/>
    <property type="chains" value="H=2-126"/>
</dbReference>
<dbReference type="PDB" id="7B7D">
    <property type="method" value="EM"/>
    <property type="resolution" value="3.30 A"/>
    <property type="chains" value="G=2-126"/>
</dbReference>
<dbReference type="PDB" id="7NRC">
    <property type="method" value="EM"/>
    <property type="resolution" value="3.90 A"/>
    <property type="chains" value="SG=2-126"/>
</dbReference>
<dbReference type="PDB" id="7NRD">
    <property type="method" value="EM"/>
    <property type="resolution" value="4.36 A"/>
    <property type="chains" value="SG=2-126"/>
</dbReference>
<dbReference type="PDB" id="7ZPQ">
    <property type="method" value="EM"/>
    <property type="resolution" value="3.47 A"/>
    <property type="chains" value="AR=1-136"/>
</dbReference>
<dbReference type="PDB" id="8P4V">
    <property type="method" value="X-ray"/>
    <property type="resolution" value="3.16 A"/>
    <property type="chains" value="S=1-136"/>
</dbReference>
<dbReference type="PDB" id="9F9S">
    <property type="method" value="EM"/>
    <property type="resolution" value="2.90 A"/>
    <property type="chains" value="Sr=1-136"/>
</dbReference>
<dbReference type="PDBsum" id="5M1J"/>
<dbReference type="PDBsum" id="5MC6"/>
<dbReference type="PDBsum" id="5MEI"/>
<dbReference type="PDBsum" id="5TBW"/>
<dbReference type="PDBsum" id="5TGA"/>
<dbReference type="PDBsum" id="5TGM"/>
<dbReference type="PDBsum" id="6GQ1"/>
<dbReference type="PDBsum" id="6GQB"/>
<dbReference type="PDBsum" id="6GQV"/>
<dbReference type="PDBsum" id="6SNT"/>
<dbReference type="PDBsum" id="6SV4"/>
<dbReference type="PDBsum" id="6T7I"/>
<dbReference type="PDBsum" id="6T7T"/>
<dbReference type="PDBsum" id="6T83"/>
<dbReference type="PDBsum" id="6TB3"/>
<dbReference type="PDBsum" id="6TNU"/>
<dbReference type="PDBsum" id="6WOO"/>
<dbReference type="PDBsum" id="6XIQ"/>
<dbReference type="PDBsum" id="6XIR"/>
<dbReference type="PDBsum" id="7A1G"/>
<dbReference type="PDBsum" id="7B7D"/>
<dbReference type="PDBsum" id="7NRC"/>
<dbReference type="PDBsum" id="7NRD"/>
<dbReference type="PDBsum" id="7ZPQ"/>
<dbReference type="PDBsum" id="8P4V"/>
<dbReference type="PDBsum" id="9F9S"/>
<dbReference type="EMDB" id="EMD-0047"/>
<dbReference type="EMDB" id="EMD-0048"/>
<dbReference type="EMDB" id="EMD-0049"/>
<dbReference type="EMDB" id="EMD-10262"/>
<dbReference type="EMDB" id="EMD-10315"/>
<dbReference type="EMDB" id="EMD-10396"/>
<dbReference type="EMDB" id="EMD-10397"/>
<dbReference type="EMDB" id="EMD-10398"/>
<dbReference type="EMDB" id="EMD-10431"/>
<dbReference type="EMDB" id="EMD-10537"/>
<dbReference type="EMDB" id="EMD-11608"/>
<dbReference type="EMDB" id="EMD-12081"/>
<dbReference type="EMDB" id="EMD-12534"/>
<dbReference type="EMDB" id="EMD-12535"/>
<dbReference type="EMDB" id="EMD-14861"/>
<dbReference type="EMDB" id="EMD-21859"/>
<dbReference type="EMDB" id="EMD-22196"/>
<dbReference type="EMDB" id="EMD-22198"/>
<dbReference type="EMDB" id="EMD-3461"/>
<dbReference type="EMDB" id="EMD-4140"/>
<dbReference type="EMDB" id="EMD-50259"/>
<dbReference type="SMR" id="P14127"/>
<dbReference type="BioGRID" id="32502">
    <property type="interactions" value="223"/>
</dbReference>
<dbReference type="ComplexPortal" id="CPX-1599">
    <property type="entry name" value="40S cytosolic small ribosomal subunit"/>
</dbReference>
<dbReference type="FunCoup" id="P14127">
    <property type="interactions" value="1272"/>
</dbReference>
<dbReference type="IntAct" id="P14127">
    <property type="interactions" value="94"/>
</dbReference>
<dbReference type="MINT" id="P14127"/>
<dbReference type="STRING" id="4932.YDR447C"/>
<dbReference type="iPTMnet" id="P14127"/>
<dbReference type="PaxDb" id="4932-YDR447C"/>
<dbReference type="PeptideAtlas" id="P14127"/>
<dbReference type="EnsemblFungi" id="YDR447C_mRNA">
    <property type="protein sequence ID" value="YDR447C"/>
    <property type="gene ID" value="YDR447C"/>
</dbReference>
<dbReference type="GeneID" id="852058"/>
<dbReference type="KEGG" id="sce:YDR447C"/>
<dbReference type="AGR" id="SGD:S000002855"/>
<dbReference type="SGD" id="S000002855">
    <property type="gene designation" value="RPS17B"/>
</dbReference>
<dbReference type="VEuPathDB" id="FungiDB:YDR447C"/>
<dbReference type="eggNOG" id="KOG0187">
    <property type="taxonomic scope" value="Eukaryota"/>
</dbReference>
<dbReference type="GeneTree" id="ENSGT00390000006548"/>
<dbReference type="HOGENOM" id="CLU_112958_0_1_1"/>
<dbReference type="InParanoid" id="P14127"/>
<dbReference type="OMA" id="MKRIQQG"/>
<dbReference type="OrthoDB" id="1727351at2759"/>
<dbReference type="BioCyc" id="YEAST:G3O-29978-MONOMER"/>
<dbReference type="Reactome" id="R-SCE-156827">
    <property type="pathway name" value="L13a-mediated translational silencing of Ceruloplasmin expression"/>
</dbReference>
<dbReference type="Reactome" id="R-SCE-1799339">
    <property type="pathway name" value="SRP-dependent cotranslational protein targeting to membrane"/>
</dbReference>
<dbReference type="Reactome" id="R-SCE-72649">
    <property type="pathway name" value="Translation initiation complex formation"/>
</dbReference>
<dbReference type="Reactome" id="R-SCE-72689">
    <property type="pathway name" value="Formation of a pool of free 40S subunits"/>
</dbReference>
<dbReference type="Reactome" id="R-SCE-72695">
    <property type="pathway name" value="Formation of the ternary complex, and subsequently, the 43S complex"/>
</dbReference>
<dbReference type="Reactome" id="R-SCE-72702">
    <property type="pathway name" value="Ribosomal scanning and start codon recognition"/>
</dbReference>
<dbReference type="Reactome" id="R-SCE-72706">
    <property type="pathway name" value="GTP hydrolysis and joining of the 60S ribosomal subunit"/>
</dbReference>
<dbReference type="Reactome" id="R-SCE-975956">
    <property type="pathway name" value="Nonsense Mediated Decay (NMD) independent of the Exon Junction Complex (EJC)"/>
</dbReference>
<dbReference type="Reactome" id="R-SCE-975957">
    <property type="pathway name" value="Nonsense Mediated Decay (NMD) enhanced by the Exon Junction Complex (EJC)"/>
</dbReference>
<dbReference type="BioGRID-ORCS" id="852058">
    <property type="hits" value="0 hits in 10 CRISPR screens"/>
</dbReference>
<dbReference type="PRO" id="PR:P14127"/>
<dbReference type="Proteomes" id="UP000002311">
    <property type="component" value="Chromosome IV"/>
</dbReference>
<dbReference type="RNAct" id="P14127">
    <property type="molecule type" value="protein"/>
</dbReference>
<dbReference type="GO" id="GO:0005829">
    <property type="term" value="C:cytosol"/>
    <property type="evidence" value="ECO:0000304"/>
    <property type="project" value="Reactome"/>
</dbReference>
<dbReference type="GO" id="GO:0022627">
    <property type="term" value="C:cytosolic small ribosomal subunit"/>
    <property type="evidence" value="ECO:0000303"/>
    <property type="project" value="SGD"/>
</dbReference>
<dbReference type="GO" id="GO:0003735">
    <property type="term" value="F:structural constituent of ribosome"/>
    <property type="evidence" value="ECO:0000303"/>
    <property type="project" value="SGD"/>
</dbReference>
<dbReference type="GO" id="GO:0002181">
    <property type="term" value="P:cytoplasmic translation"/>
    <property type="evidence" value="ECO:0000303"/>
    <property type="project" value="SGD"/>
</dbReference>
<dbReference type="GO" id="GO:0000028">
    <property type="term" value="P:ribosomal small subunit assembly"/>
    <property type="evidence" value="ECO:0000315"/>
    <property type="project" value="SGD"/>
</dbReference>
<dbReference type="FunFam" id="1.10.60.20:FF:000001">
    <property type="entry name" value="40S ribosomal protein S17"/>
    <property type="match status" value="1"/>
</dbReference>
<dbReference type="Gene3D" id="1.10.60.20">
    <property type="entry name" value="Ribosomal protein S17e-like"/>
    <property type="match status" value="1"/>
</dbReference>
<dbReference type="HAMAP" id="MF_00511">
    <property type="entry name" value="Ribosomal_eS17"/>
    <property type="match status" value="1"/>
</dbReference>
<dbReference type="InterPro" id="IPR001210">
    <property type="entry name" value="Ribosomal_eS17"/>
</dbReference>
<dbReference type="InterPro" id="IPR018273">
    <property type="entry name" value="Ribosomal_eS17_CS"/>
</dbReference>
<dbReference type="InterPro" id="IPR036401">
    <property type="entry name" value="Ribosomal_eS17_sf"/>
</dbReference>
<dbReference type="NCBIfam" id="NF002242">
    <property type="entry name" value="PRK01151.1"/>
    <property type="match status" value="1"/>
</dbReference>
<dbReference type="PANTHER" id="PTHR10732">
    <property type="entry name" value="40S RIBOSOMAL PROTEIN S17"/>
    <property type="match status" value="1"/>
</dbReference>
<dbReference type="PANTHER" id="PTHR10732:SF0">
    <property type="entry name" value="40S RIBOSOMAL PROTEIN S17"/>
    <property type="match status" value="1"/>
</dbReference>
<dbReference type="Pfam" id="PF00833">
    <property type="entry name" value="Ribosomal_S17e"/>
    <property type="match status" value="1"/>
</dbReference>
<dbReference type="SUPFAM" id="SSF116820">
    <property type="entry name" value="Rps17e-like"/>
    <property type="match status" value="1"/>
</dbReference>
<dbReference type="PROSITE" id="PS00712">
    <property type="entry name" value="RIBOSOMAL_S17E"/>
    <property type="match status" value="1"/>
</dbReference>
<comment type="function">
    <text evidence="7">Component of the ribosome, a large ribonucleoprotein complex responsible for the synthesis of proteins in the cell. The small ribosomal subunit (SSU) binds messenger RNAs (mRNAs) and translates the encoded message by selecting cognate aminoacyl-transfer RNA (tRNA) molecules. The large subunit (LSU) contains the ribosomal catalytic site termed the peptidyl transferase center (PTC), which catalyzes the formation of peptide bonds, thereby polymerizing the amino acids delivered by tRNAs into a polypeptide chain. The nascent polypeptides leave the ribosome through a tunnel in the LSU and interact with protein factors that function in enzymatic processing, targeting, and the membrane insertion of nascent chains at the exit of the ribosomal tunnel.</text>
</comment>
<comment type="subunit">
    <text evidence="3 8">Component of the small ribosomal subunit (SSU). Mature yeast ribosomes consist of a small (40S) and a large (60S) subunit. The 40S small subunit contains 1 molecule of ribosomal RNA (18S rRNA) and 33 different proteins (encoded by 57 genes). The large 60S subunit contains 3 rRNA molecules (25S, 5.8S and 5S rRNA) and 46 different proteins (encoded by 81 genes) (PubMed:22096102, PubMed:9559554).</text>
</comment>
<comment type="subcellular location">
    <subcellularLocation>
        <location evidence="1 3">Cytoplasm</location>
    </subcellularLocation>
</comment>
<comment type="miscellaneous">
    <text evidence="2">Present with 30500 molecules/cell in log phase SD medium.</text>
</comment>
<comment type="miscellaneous">
    <text evidence="6">There are 2 genes for eS17 in yeast.</text>
</comment>
<comment type="similarity">
    <text evidence="6">Belongs to the eukaryotic ribosomal protein eS17 family.</text>
</comment>
<reference key="1">
    <citation type="journal article" date="1984" name="Mol. Cell. Biol.">
        <title>Two genes for ribosomal protein 51 of Saccharomyces cerevisiae complement and contribute to the ribosomes.</title>
        <authorList>
            <person name="Abovich N."/>
            <person name="Rosbash M."/>
        </authorList>
    </citation>
    <scope>NUCLEOTIDE SEQUENCE [GENOMIC DNA]</scope>
</reference>
<reference key="2">
    <citation type="journal article" date="1997" name="Nature">
        <title>The nucleotide sequence of Saccharomyces cerevisiae chromosome IV.</title>
        <authorList>
            <person name="Jacq C."/>
            <person name="Alt-Moerbe J."/>
            <person name="Andre B."/>
            <person name="Arnold W."/>
            <person name="Bahr A."/>
            <person name="Ballesta J.P.G."/>
            <person name="Bargues M."/>
            <person name="Baron L."/>
            <person name="Becker A."/>
            <person name="Biteau N."/>
            <person name="Bloecker H."/>
            <person name="Blugeon C."/>
            <person name="Boskovic J."/>
            <person name="Brandt P."/>
            <person name="Brueckner M."/>
            <person name="Buitrago M.J."/>
            <person name="Coster F."/>
            <person name="Delaveau T."/>
            <person name="del Rey F."/>
            <person name="Dujon B."/>
            <person name="Eide L.G."/>
            <person name="Garcia-Cantalejo J.M."/>
            <person name="Goffeau A."/>
            <person name="Gomez-Peris A."/>
            <person name="Granotier C."/>
            <person name="Hanemann V."/>
            <person name="Hankeln T."/>
            <person name="Hoheisel J.D."/>
            <person name="Jaeger W."/>
            <person name="Jimenez A."/>
            <person name="Jonniaux J.-L."/>
            <person name="Kraemer C."/>
            <person name="Kuester H."/>
            <person name="Laamanen P."/>
            <person name="Legros Y."/>
            <person name="Louis E.J."/>
            <person name="Moeller-Rieker S."/>
            <person name="Monnet A."/>
            <person name="Moro M."/>
            <person name="Mueller-Auer S."/>
            <person name="Nussbaumer B."/>
            <person name="Paricio N."/>
            <person name="Paulin L."/>
            <person name="Perea J."/>
            <person name="Perez-Alonso M."/>
            <person name="Perez-Ortin J.E."/>
            <person name="Pohl T.M."/>
            <person name="Prydz H."/>
            <person name="Purnelle B."/>
            <person name="Rasmussen S.W."/>
            <person name="Remacha M.A."/>
            <person name="Revuelta J.L."/>
            <person name="Rieger M."/>
            <person name="Salom D."/>
            <person name="Saluz H.P."/>
            <person name="Saiz J.E."/>
            <person name="Saren A.-M."/>
            <person name="Schaefer M."/>
            <person name="Scharfe M."/>
            <person name="Schmidt E.R."/>
            <person name="Schneider C."/>
            <person name="Scholler P."/>
            <person name="Schwarz S."/>
            <person name="Soler-Mira A."/>
            <person name="Urrestarazu L.A."/>
            <person name="Verhasselt P."/>
            <person name="Vissers S."/>
            <person name="Voet M."/>
            <person name="Volckaert G."/>
            <person name="Wagner G."/>
            <person name="Wambutt R."/>
            <person name="Wedler E."/>
            <person name="Wedler H."/>
            <person name="Woelfl S."/>
            <person name="Harris D.E."/>
            <person name="Bowman S."/>
            <person name="Brown D."/>
            <person name="Churcher C.M."/>
            <person name="Connor R."/>
            <person name="Dedman K."/>
            <person name="Gentles S."/>
            <person name="Hamlin N."/>
            <person name="Hunt S."/>
            <person name="Jones L."/>
            <person name="McDonald S."/>
            <person name="Murphy L.D."/>
            <person name="Niblett D."/>
            <person name="Odell C."/>
            <person name="Oliver K."/>
            <person name="Rajandream M.A."/>
            <person name="Richards C."/>
            <person name="Shore L."/>
            <person name="Walsh S.V."/>
            <person name="Barrell B.G."/>
            <person name="Dietrich F.S."/>
            <person name="Mulligan J.T."/>
            <person name="Allen E."/>
            <person name="Araujo R."/>
            <person name="Aviles E."/>
            <person name="Berno A."/>
            <person name="Carpenter J."/>
            <person name="Chen E."/>
            <person name="Cherry J.M."/>
            <person name="Chung E."/>
            <person name="Duncan M."/>
            <person name="Hunicke-Smith S."/>
            <person name="Hyman R.W."/>
            <person name="Komp C."/>
            <person name="Lashkari D."/>
            <person name="Lew H."/>
            <person name="Lin D."/>
            <person name="Mosedale D."/>
            <person name="Nakahara K."/>
            <person name="Namath A."/>
            <person name="Oefner P."/>
            <person name="Oh C."/>
            <person name="Petel F.X."/>
            <person name="Roberts D."/>
            <person name="Schramm S."/>
            <person name="Schroeder M."/>
            <person name="Shogren T."/>
            <person name="Shroff N."/>
            <person name="Winant A."/>
            <person name="Yelton M.A."/>
            <person name="Botstein D."/>
            <person name="Davis R.W."/>
            <person name="Johnston M."/>
            <person name="Andrews S."/>
            <person name="Brinkman R."/>
            <person name="Cooper J."/>
            <person name="Ding H."/>
            <person name="Du Z."/>
            <person name="Favello A."/>
            <person name="Fulton L."/>
            <person name="Gattung S."/>
            <person name="Greco T."/>
            <person name="Hallsworth K."/>
            <person name="Hawkins J."/>
            <person name="Hillier L.W."/>
            <person name="Jier M."/>
            <person name="Johnson D."/>
            <person name="Johnston L."/>
            <person name="Kirsten J."/>
            <person name="Kucaba T."/>
            <person name="Langston Y."/>
            <person name="Latreille P."/>
            <person name="Le T."/>
            <person name="Mardis E."/>
            <person name="Menezes S."/>
            <person name="Miller N."/>
            <person name="Nhan M."/>
            <person name="Pauley A."/>
            <person name="Peluso D."/>
            <person name="Rifkin L."/>
            <person name="Riles L."/>
            <person name="Taich A."/>
            <person name="Trevaskis E."/>
            <person name="Vignati D."/>
            <person name="Wilcox L."/>
            <person name="Wohldman P."/>
            <person name="Vaudin M."/>
            <person name="Wilson R."/>
            <person name="Waterston R."/>
            <person name="Albermann K."/>
            <person name="Hani J."/>
            <person name="Heumann K."/>
            <person name="Kleine K."/>
            <person name="Mewes H.-W."/>
            <person name="Zollner A."/>
            <person name="Zaccaria P."/>
        </authorList>
    </citation>
    <scope>NUCLEOTIDE SEQUENCE [LARGE SCALE GENOMIC DNA]</scope>
    <source>
        <strain>ATCC 204508 / S288c</strain>
    </source>
</reference>
<reference key="3">
    <citation type="journal article" date="2014" name="G3 (Bethesda)">
        <title>The reference genome sequence of Saccharomyces cerevisiae: Then and now.</title>
        <authorList>
            <person name="Engel S.R."/>
            <person name="Dietrich F.S."/>
            <person name="Fisk D.G."/>
            <person name="Binkley G."/>
            <person name="Balakrishnan R."/>
            <person name="Costanzo M.C."/>
            <person name="Dwight S.S."/>
            <person name="Hitz B.C."/>
            <person name="Karra K."/>
            <person name="Nash R.S."/>
            <person name="Weng S."/>
            <person name="Wong E.D."/>
            <person name="Lloyd P."/>
            <person name="Skrzypek M.S."/>
            <person name="Miyasato S.R."/>
            <person name="Simison M."/>
            <person name="Cherry J.M."/>
        </authorList>
    </citation>
    <scope>GENOME REANNOTATION</scope>
    <source>
        <strain>ATCC 204508 / S288c</strain>
    </source>
</reference>
<reference key="4">
    <citation type="journal article" date="1998" name="Yeast">
        <title>The list of cytoplasmic ribosomal proteins of Saccharomyces cerevisiae.</title>
        <authorList>
            <person name="Planta R.J."/>
            <person name="Mager W.H."/>
        </authorList>
    </citation>
    <scope>NOMENCLATURE</scope>
    <scope>SUBUNIT</scope>
</reference>
<reference key="5">
    <citation type="journal article" date="2003" name="Nature">
        <title>Global analysis of protein localization in budding yeast.</title>
        <authorList>
            <person name="Huh W.-K."/>
            <person name="Falvo J.V."/>
            <person name="Gerke L.C."/>
            <person name="Carroll A.S."/>
            <person name="Howson R.W."/>
            <person name="Weissman J.S."/>
            <person name="O'Shea E.K."/>
        </authorList>
    </citation>
    <scope>SUBCELLULAR LOCATION [LARGE SCALE ANALYSIS]</scope>
</reference>
<reference key="6">
    <citation type="journal article" date="2003" name="Nature">
        <title>Global analysis of protein expression in yeast.</title>
        <authorList>
            <person name="Ghaemmaghami S."/>
            <person name="Huh W.-K."/>
            <person name="Bower K."/>
            <person name="Howson R.W."/>
            <person name="Belle A."/>
            <person name="Dephoure N."/>
            <person name="O'Shea E.K."/>
            <person name="Weissman J.S."/>
        </authorList>
    </citation>
    <scope>LEVEL OF PROTEIN EXPRESSION [LARGE SCALE ANALYSIS]</scope>
</reference>
<reference key="7">
    <citation type="journal article" date="2011" name="Science">
        <title>The structure of the eukaryotic ribosome at 3.0 A resolution.</title>
        <authorList>
            <person name="Ben-Shem A."/>
            <person name="Garreau de Loubresse N."/>
            <person name="Melnikov S."/>
            <person name="Jenner L."/>
            <person name="Yusupova G."/>
            <person name="Yusupov M."/>
        </authorList>
    </citation>
    <scope>SUBUNIT</scope>
    <scope>SUBCELLULAR LOCATION</scope>
</reference>
<reference key="8">
    <citation type="journal article" date="2014" name="Curr. Opin. Struct. Biol.">
        <title>A new system for naming ribosomal proteins.</title>
        <authorList>
            <person name="Ban N."/>
            <person name="Beckmann R."/>
            <person name="Cate J.H.D."/>
            <person name="Dinman J.D."/>
            <person name="Dragon F."/>
            <person name="Ellis S.R."/>
            <person name="Lafontaine D.L.J."/>
            <person name="Lindahl L."/>
            <person name="Liljas A."/>
            <person name="Lipton J.M."/>
            <person name="McAlear M.A."/>
            <person name="Moore P.B."/>
            <person name="Noller H.F."/>
            <person name="Ortega J."/>
            <person name="Panse V.G."/>
            <person name="Ramakrishnan V."/>
            <person name="Spahn C.M.T."/>
            <person name="Steitz T.A."/>
            <person name="Tchorzewski M."/>
            <person name="Tollervey D."/>
            <person name="Warren A.J."/>
            <person name="Williamson J.R."/>
            <person name="Wilson D."/>
            <person name="Yonath A."/>
            <person name="Yusupov M."/>
        </authorList>
    </citation>
    <scope>NOMENCLATURE</scope>
</reference>
<protein>
    <recommendedName>
        <fullName evidence="4">Small ribosomal subunit protein eS17B</fullName>
    </recommendedName>
    <alternativeName>
        <fullName evidence="5">40S ribosomal protein S17-B</fullName>
    </alternativeName>
    <alternativeName>
        <fullName>RP51B</fullName>
    </alternativeName>
</protein>